<organismHost>
    <name type="scientific">Equus caballus</name>
    <name type="common">Horse</name>
    <dbReference type="NCBI Taxonomy" id="9796"/>
</organismHost>
<accession>P16605</accession>
<dbReference type="EMBL" id="M28380">
    <property type="protein sequence ID" value="AAA57148.1"/>
    <property type="molecule type" value="Genomic_RNA"/>
</dbReference>
<dbReference type="EMBL" id="D13783">
    <property type="protein sequence ID" value="BAA02927.1"/>
    <property type="molecule type" value="Genomic_RNA"/>
</dbReference>
<dbReference type="PIR" id="B33076">
    <property type="entry name" value="MNVUMB"/>
</dbReference>
<dbReference type="GO" id="GO:0016032">
    <property type="term" value="P:viral process"/>
    <property type="evidence" value="ECO:0007669"/>
    <property type="project" value="InterPro"/>
</dbReference>
<dbReference type="InterPro" id="IPR000797">
    <property type="entry name" value="Bunya_NSs"/>
</dbReference>
<dbReference type="Pfam" id="PF01104">
    <property type="entry name" value="Bunya_NS-S"/>
    <property type="match status" value="1"/>
</dbReference>
<dbReference type="PIRSF" id="PIRSF003954">
    <property type="entry name" value="NS-S_OrthobunV"/>
    <property type="match status" value="1"/>
</dbReference>
<evidence type="ECO:0000305" key="1"/>
<protein>
    <recommendedName>
        <fullName>Non-structural protein NS-S</fullName>
    </recommendedName>
</protein>
<feature type="chain" id="PRO_0000221977" description="Non-structural protein NS-S">
    <location>
        <begin position="1"/>
        <end position="101"/>
    </location>
</feature>
<proteinExistence type="inferred from homology"/>
<keyword id="KW-0024">Alternative initiation</keyword>
<sequence>MMSLLTPAVLLTQRLHTLTLSVSTPLGLVMTTFESSTLKDARLKLVSQKEVSGRLRLTLGAGRLLYLIQIFLATGTVQFQTMVLPSTDSVDSLPGTYLRKF</sequence>
<name>NSS_MAGV</name>
<comment type="alternative products">
    <event type="alternative initiation"/>
    <isoform>
        <id>P16605-1</id>
        <name>NSS</name>
        <sequence type="displayed"/>
    </isoform>
    <isoform>
        <id>P16606-1</id>
        <name>N</name>
        <sequence type="external"/>
    </isoform>
</comment>
<comment type="miscellaneous">
    <molecule>Isoform NSS</molecule>
    <text>Produced by alternative initiation in the N gene, but encoded on another frame.</text>
</comment>
<comment type="similarity">
    <text evidence="1">Belongs to the orthobunyavirus NS-S protein family.</text>
</comment>
<reference key="1">
    <citation type="journal article" date="1989" name="Virology">
        <title>Nucleotide sequence and expression of the small (S) RNA segment of Maguari bunyavirus.</title>
        <authorList>
            <person name="Elliott R.M."/>
            <person name="McGregor A."/>
        </authorList>
    </citation>
    <scope>NUCLEOTIDE SEQUENCE [GENOMIC RNA]</scope>
</reference>
<gene>
    <name type="primary">N</name>
</gene>
<organism>
    <name type="scientific">Maguari virus</name>
    <dbReference type="NCBI Taxonomy" id="11575"/>
    <lineage>
        <taxon>Viruses</taxon>
        <taxon>Riboviria</taxon>
        <taxon>Orthornavirae</taxon>
        <taxon>Negarnaviricota</taxon>
        <taxon>Polyploviricotina</taxon>
        <taxon>Ellioviricetes</taxon>
        <taxon>Bunyavirales</taxon>
        <taxon>Peribunyaviridae</taxon>
        <taxon>Orthobunyavirus</taxon>
        <taxon>Orthobunyavirus maguariense</taxon>
    </lineage>
</organism>